<dbReference type="EC" id="7.1.1.2"/>
<dbReference type="EMBL" id="AP003195">
    <property type="protein sequence ID" value="BAB62915.1"/>
    <property type="molecule type" value="Genomic_DNA"/>
</dbReference>
<dbReference type="EMBL" id="X57246">
    <property type="protein sequence ID" value="CAA40522.1"/>
    <property type="molecule type" value="Genomic_DNA"/>
</dbReference>
<dbReference type="PIR" id="S25422">
    <property type="entry name" value="S25422"/>
</dbReference>
<dbReference type="RefSeq" id="NP_572014.1">
    <property type="nucleotide sequence ID" value="NC_003408.1"/>
</dbReference>
<dbReference type="SMR" id="P24968"/>
<dbReference type="Ensembl" id="ENSCJPT00005000007.1">
    <property type="protein sequence ID" value="ENSCJPP00005000002.1"/>
    <property type="gene ID" value="ENSCJPG00005000007.1"/>
</dbReference>
<dbReference type="GeneID" id="804668"/>
<dbReference type="KEGG" id="cjo:804668"/>
<dbReference type="CTD" id="4535"/>
<dbReference type="GeneTree" id="ENSGT00390000006621"/>
<dbReference type="OrthoDB" id="531329at2759"/>
<dbReference type="Proteomes" id="UP000694412">
    <property type="component" value="Unassembled WGS sequence"/>
</dbReference>
<dbReference type="GO" id="GO:0005743">
    <property type="term" value="C:mitochondrial inner membrane"/>
    <property type="evidence" value="ECO:0007669"/>
    <property type="project" value="UniProtKB-SubCell"/>
</dbReference>
<dbReference type="GO" id="GO:0008137">
    <property type="term" value="F:NADH dehydrogenase (ubiquinone) activity"/>
    <property type="evidence" value="ECO:0007669"/>
    <property type="project" value="UniProtKB-EC"/>
</dbReference>
<dbReference type="GO" id="GO:0009060">
    <property type="term" value="P:aerobic respiration"/>
    <property type="evidence" value="ECO:0007669"/>
    <property type="project" value="TreeGrafter"/>
</dbReference>
<dbReference type="HAMAP" id="MF_01350">
    <property type="entry name" value="NDH1_NuoH"/>
    <property type="match status" value="1"/>
</dbReference>
<dbReference type="InterPro" id="IPR001694">
    <property type="entry name" value="NADH_UbQ_OxRdtase_su1/FPO"/>
</dbReference>
<dbReference type="InterPro" id="IPR018086">
    <property type="entry name" value="NADH_UbQ_OxRdtase_su1_CS"/>
</dbReference>
<dbReference type="PANTHER" id="PTHR11432">
    <property type="entry name" value="NADH DEHYDROGENASE SUBUNIT 1"/>
    <property type="match status" value="1"/>
</dbReference>
<dbReference type="PANTHER" id="PTHR11432:SF3">
    <property type="entry name" value="NADH-UBIQUINONE OXIDOREDUCTASE CHAIN 1"/>
    <property type="match status" value="1"/>
</dbReference>
<dbReference type="Pfam" id="PF00146">
    <property type="entry name" value="NADHdh"/>
    <property type="match status" value="1"/>
</dbReference>
<dbReference type="PROSITE" id="PS00667">
    <property type="entry name" value="COMPLEX1_ND1_1"/>
    <property type="match status" value="1"/>
</dbReference>
<dbReference type="PROSITE" id="PS00668">
    <property type="entry name" value="COMPLEX1_ND1_2"/>
    <property type="match status" value="1"/>
</dbReference>
<organism>
    <name type="scientific">Coturnix japonica</name>
    <name type="common">Japanese quail</name>
    <name type="synonym">Coturnix coturnix japonica</name>
    <dbReference type="NCBI Taxonomy" id="93934"/>
    <lineage>
        <taxon>Eukaryota</taxon>
        <taxon>Metazoa</taxon>
        <taxon>Chordata</taxon>
        <taxon>Craniata</taxon>
        <taxon>Vertebrata</taxon>
        <taxon>Euteleostomi</taxon>
        <taxon>Archelosauria</taxon>
        <taxon>Archosauria</taxon>
        <taxon>Dinosauria</taxon>
        <taxon>Saurischia</taxon>
        <taxon>Theropoda</taxon>
        <taxon>Coelurosauria</taxon>
        <taxon>Aves</taxon>
        <taxon>Neognathae</taxon>
        <taxon>Galloanserae</taxon>
        <taxon>Galliformes</taxon>
        <taxon>Phasianidae</taxon>
        <taxon>Perdicinae</taxon>
        <taxon>Coturnix</taxon>
    </lineage>
</organism>
<accession>P24968</accession>
<accession>Q8SEX3</accession>
<comment type="function">
    <text evidence="1">Core subunit of the mitochondrial membrane respiratory chain NADH dehydrogenase (Complex I) that is believed to belong to the minimal assembly required for catalysis. Complex I functions in the transfer of electrons from NADH to the respiratory chain. The immediate electron acceptor for the enzyme is believed to be ubiquinone (By similarity).</text>
</comment>
<comment type="catalytic activity">
    <reaction>
        <text>a ubiquinone + NADH + 5 H(+)(in) = a ubiquinol + NAD(+) + 4 H(+)(out)</text>
        <dbReference type="Rhea" id="RHEA:29091"/>
        <dbReference type="Rhea" id="RHEA-COMP:9565"/>
        <dbReference type="Rhea" id="RHEA-COMP:9566"/>
        <dbReference type="ChEBI" id="CHEBI:15378"/>
        <dbReference type="ChEBI" id="CHEBI:16389"/>
        <dbReference type="ChEBI" id="CHEBI:17976"/>
        <dbReference type="ChEBI" id="CHEBI:57540"/>
        <dbReference type="ChEBI" id="CHEBI:57945"/>
        <dbReference type="EC" id="7.1.1.2"/>
    </reaction>
</comment>
<comment type="subcellular location">
    <subcellularLocation>
        <location evidence="1">Mitochondrion inner membrane</location>
        <topology evidence="1">Multi-pass membrane protein</topology>
    </subcellularLocation>
</comment>
<comment type="similarity">
    <text evidence="3">Belongs to the complex I subunit 1 family.</text>
</comment>
<geneLocation type="mitochondrion"/>
<proteinExistence type="inferred from homology"/>
<feature type="chain" id="PRO_0000117373" description="NADH-ubiquinone oxidoreductase chain 1">
    <location>
        <begin position="1"/>
        <end position="324"/>
    </location>
</feature>
<feature type="transmembrane region" description="Helical" evidence="2">
    <location>
        <begin position="10"/>
        <end position="30"/>
    </location>
</feature>
<feature type="transmembrane region" description="Helical" evidence="2">
    <location>
        <begin position="76"/>
        <end position="96"/>
    </location>
</feature>
<feature type="transmembrane region" description="Helical" evidence="2">
    <location>
        <begin position="107"/>
        <end position="127"/>
    </location>
</feature>
<feature type="transmembrane region" description="Helical" evidence="2">
    <location>
        <begin position="143"/>
        <end position="163"/>
    </location>
</feature>
<feature type="transmembrane region" description="Helical" evidence="2">
    <location>
        <begin position="178"/>
        <end position="198"/>
    </location>
</feature>
<feature type="transmembrane region" description="Helical" evidence="2">
    <location>
        <begin position="229"/>
        <end position="249"/>
    </location>
</feature>
<feature type="transmembrane region" description="Helical" evidence="2">
    <location>
        <begin position="260"/>
        <end position="280"/>
    </location>
</feature>
<feature type="transmembrane region" description="Helical" evidence="2">
    <location>
        <begin position="300"/>
        <end position="320"/>
    </location>
</feature>
<gene>
    <name type="primary">MT-ND1</name>
    <name type="synonym">MTND1</name>
    <name type="synonym">NADH1</name>
    <name type="synonym">ND1</name>
</gene>
<protein>
    <recommendedName>
        <fullName>NADH-ubiquinone oxidoreductase chain 1</fullName>
        <ecNumber>7.1.1.2</ecNumber>
    </recommendedName>
    <alternativeName>
        <fullName>NADH dehydrogenase subunit 1</fullName>
    </alternativeName>
</protein>
<keyword id="KW-0249">Electron transport</keyword>
<keyword id="KW-0472">Membrane</keyword>
<keyword id="KW-0496">Mitochondrion</keyword>
<keyword id="KW-0999">Mitochondrion inner membrane</keyword>
<keyword id="KW-0520">NAD</keyword>
<keyword id="KW-1185">Reference proteome</keyword>
<keyword id="KW-0679">Respiratory chain</keyword>
<keyword id="KW-1278">Translocase</keyword>
<keyword id="KW-0812">Transmembrane</keyword>
<keyword id="KW-1133">Transmembrane helix</keyword>
<keyword id="KW-0813">Transport</keyword>
<keyword id="KW-0830">Ubiquinone</keyword>
<name>NU1M_COTJA</name>
<evidence type="ECO:0000250" key="1"/>
<evidence type="ECO:0000255" key="2"/>
<evidence type="ECO:0000305" key="3"/>
<sequence>MTLSTLTSLMIMTLSYMIPILIAVAFLTLVERKILSYMQARKGPNIVGPFGLLQPIADGVKLFIKEPIRPSTSSPFLFILTPILALLLALTIWTPLPLPFPMTDLNLGLLFLLAMSSLTVYSLLWSGWASNSKYALIGALRAVAQTISYEVTLAIILLSTIMLSGNYTLSTLSITQEPMYLIFSSWPLTMMWYISTLAETNRAPFDLTEGESELVSGFNVEYAAGPFALFFLAEYANIMLMNTLTITLFLNPSFLSPPSELFSITLATKVLLLSSSFLWIRASYPRFRYDQLMHLLWKNFLPLTLAMCLWHTSMPISYAGLPPA</sequence>
<reference key="1">
    <citation type="journal article" date="2001" name="Anim. Genet.">
        <title>Complete sequence of the Japanese quail (Coturnix japonica) mitochondrial genome and its genetic relationship with related species.</title>
        <authorList>
            <person name="Nishibori M."/>
            <person name="Hayashi T."/>
            <person name="Tsudzuki M."/>
            <person name="Yamamoto Y."/>
            <person name="Yasue H."/>
        </authorList>
    </citation>
    <scope>NUCLEOTIDE SEQUENCE [GENOMIC DNA]</scope>
    <source>
        <tissue>Blood</tissue>
    </source>
</reference>
<reference key="2">
    <citation type="journal article" date="1991" name="J. Mol. Evol.">
        <title>Nucleotide sequence and evolution of coding and noncoding regions of a quail mitochondrial genome.</title>
        <authorList>
            <person name="Desjardins P."/>
            <person name="Morais R."/>
        </authorList>
    </citation>
    <scope>NUCLEOTIDE SEQUENCE [GENOMIC DNA] OF 253-324</scope>
    <source>
        <tissue>Liver</tissue>
    </source>
</reference>